<comment type="function">
    <text evidence="1">One of the primary rRNA binding proteins, it binds directly to 16S rRNA where it helps nucleate assembly of the platform of the 30S subunit by binding and bridging several RNA helices of the 16S rRNA.</text>
</comment>
<comment type="function">
    <text evidence="1">Forms an intersubunit bridge (bridge B4) with the 23S rRNA of the 50S subunit in the ribosome.</text>
</comment>
<comment type="subunit">
    <text evidence="1">Part of the 30S ribosomal subunit. Forms a bridge to the 50S subunit in the 70S ribosome, contacting the 23S rRNA.</text>
</comment>
<comment type="similarity">
    <text evidence="1">Belongs to the universal ribosomal protein uS15 family.</text>
</comment>
<dbReference type="EMBL" id="CP000024">
    <property type="protein sequence ID" value="AAV61768.1"/>
    <property type="molecule type" value="Genomic_DNA"/>
</dbReference>
<dbReference type="RefSeq" id="WP_002949247.1">
    <property type="nucleotide sequence ID" value="NC_006449.1"/>
</dbReference>
<dbReference type="SMR" id="Q5M1R6"/>
<dbReference type="GeneID" id="66898098"/>
<dbReference type="KEGG" id="stc:str0154"/>
<dbReference type="HOGENOM" id="CLU_148518_0_0_9"/>
<dbReference type="GO" id="GO:0022627">
    <property type="term" value="C:cytosolic small ribosomal subunit"/>
    <property type="evidence" value="ECO:0007669"/>
    <property type="project" value="TreeGrafter"/>
</dbReference>
<dbReference type="GO" id="GO:0019843">
    <property type="term" value="F:rRNA binding"/>
    <property type="evidence" value="ECO:0007669"/>
    <property type="project" value="UniProtKB-UniRule"/>
</dbReference>
<dbReference type="GO" id="GO:0003735">
    <property type="term" value="F:structural constituent of ribosome"/>
    <property type="evidence" value="ECO:0007669"/>
    <property type="project" value="InterPro"/>
</dbReference>
<dbReference type="GO" id="GO:0006412">
    <property type="term" value="P:translation"/>
    <property type="evidence" value="ECO:0007669"/>
    <property type="project" value="UniProtKB-UniRule"/>
</dbReference>
<dbReference type="CDD" id="cd00353">
    <property type="entry name" value="Ribosomal_S15p_S13e"/>
    <property type="match status" value="1"/>
</dbReference>
<dbReference type="FunFam" id="1.10.287.10:FF:000002">
    <property type="entry name" value="30S ribosomal protein S15"/>
    <property type="match status" value="1"/>
</dbReference>
<dbReference type="Gene3D" id="6.10.250.3130">
    <property type="match status" value="1"/>
</dbReference>
<dbReference type="Gene3D" id="1.10.287.10">
    <property type="entry name" value="S15/NS1, RNA-binding"/>
    <property type="match status" value="1"/>
</dbReference>
<dbReference type="HAMAP" id="MF_01343_B">
    <property type="entry name" value="Ribosomal_uS15_B"/>
    <property type="match status" value="1"/>
</dbReference>
<dbReference type="InterPro" id="IPR000589">
    <property type="entry name" value="Ribosomal_uS15"/>
</dbReference>
<dbReference type="InterPro" id="IPR005290">
    <property type="entry name" value="Ribosomal_uS15_bac-type"/>
</dbReference>
<dbReference type="InterPro" id="IPR009068">
    <property type="entry name" value="uS15_NS1_RNA-bd_sf"/>
</dbReference>
<dbReference type="NCBIfam" id="TIGR00952">
    <property type="entry name" value="S15_bact"/>
    <property type="match status" value="1"/>
</dbReference>
<dbReference type="PANTHER" id="PTHR23321">
    <property type="entry name" value="RIBOSOMAL PROTEIN S15, BACTERIAL AND ORGANELLAR"/>
    <property type="match status" value="1"/>
</dbReference>
<dbReference type="PANTHER" id="PTHR23321:SF26">
    <property type="entry name" value="SMALL RIBOSOMAL SUBUNIT PROTEIN US15M"/>
    <property type="match status" value="1"/>
</dbReference>
<dbReference type="Pfam" id="PF00312">
    <property type="entry name" value="Ribosomal_S15"/>
    <property type="match status" value="1"/>
</dbReference>
<dbReference type="SMART" id="SM01387">
    <property type="entry name" value="Ribosomal_S15"/>
    <property type="match status" value="1"/>
</dbReference>
<dbReference type="SUPFAM" id="SSF47060">
    <property type="entry name" value="S15/NS1 RNA-binding domain"/>
    <property type="match status" value="1"/>
</dbReference>
<dbReference type="PROSITE" id="PS00362">
    <property type="entry name" value="RIBOSOMAL_S15"/>
    <property type="match status" value="1"/>
</dbReference>
<accession>Q5M1R6</accession>
<reference key="1">
    <citation type="journal article" date="2004" name="Nat. Biotechnol.">
        <title>Complete sequence and comparative genome analysis of the dairy bacterium Streptococcus thermophilus.</title>
        <authorList>
            <person name="Bolotin A."/>
            <person name="Quinquis B."/>
            <person name="Renault P."/>
            <person name="Sorokin A."/>
            <person name="Ehrlich S.D."/>
            <person name="Kulakauskas S."/>
            <person name="Lapidus A."/>
            <person name="Goltsman E."/>
            <person name="Mazur M."/>
            <person name="Pusch G.D."/>
            <person name="Fonstein M."/>
            <person name="Overbeek R."/>
            <person name="Kyprides N."/>
            <person name="Purnelle B."/>
            <person name="Prozzi D."/>
            <person name="Ngui K."/>
            <person name="Masuy D."/>
            <person name="Hancy F."/>
            <person name="Burteau S."/>
            <person name="Boutry M."/>
            <person name="Delcour J."/>
            <person name="Goffeau A."/>
            <person name="Hols P."/>
        </authorList>
    </citation>
    <scope>NUCLEOTIDE SEQUENCE [LARGE SCALE GENOMIC DNA]</scope>
    <source>
        <strain>CNRZ 1066</strain>
    </source>
</reference>
<sequence>MAISKEKKNEIIAQYARHEGDTGSVEVQVAVLTWEINHLNDHIKQHKKDHATYRGLMKKIGHRRNLLAYLRRKDVNRYRELISSLGLRR</sequence>
<protein>
    <recommendedName>
        <fullName evidence="1">Small ribosomal subunit protein uS15</fullName>
    </recommendedName>
    <alternativeName>
        <fullName evidence="2">30S ribosomal protein S15</fullName>
    </alternativeName>
</protein>
<keyword id="KW-0687">Ribonucleoprotein</keyword>
<keyword id="KW-0689">Ribosomal protein</keyword>
<keyword id="KW-0694">RNA-binding</keyword>
<keyword id="KW-0699">rRNA-binding</keyword>
<name>RS15_STRT1</name>
<gene>
    <name evidence="1" type="primary">rpsO</name>
    <name type="ordered locus">str0154</name>
</gene>
<proteinExistence type="inferred from homology"/>
<organism>
    <name type="scientific">Streptococcus thermophilus (strain CNRZ 1066)</name>
    <dbReference type="NCBI Taxonomy" id="299768"/>
    <lineage>
        <taxon>Bacteria</taxon>
        <taxon>Bacillati</taxon>
        <taxon>Bacillota</taxon>
        <taxon>Bacilli</taxon>
        <taxon>Lactobacillales</taxon>
        <taxon>Streptococcaceae</taxon>
        <taxon>Streptococcus</taxon>
    </lineage>
</organism>
<feature type="chain" id="PRO_0000115561" description="Small ribosomal subunit protein uS15">
    <location>
        <begin position="1"/>
        <end position="89"/>
    </location>
</feature>
<evidence type="ECO:0000255" key="1">
    <source>
        <dbReference type="HAMAP-Rule" id="MF_01343"/>
    </source>
</evidence>
<evidence type="ECO:0000305" key="2"/>